<reference key="1">
    <citation type="journal article" date="2008" name="J. Bacteriol.">
        <title>Genome sequence of a nephritogenic and highly transformable M49 strain of Streptococcus pyogenes.</title>
        <authorList>
            <person name="McShan W.M."/>
            <person name="Ferretti J.J."/>
            <person name="Karasawa T."/>
            <person name="Suvorov A.N."/>
            <person name="Lin S."/>
            <person name="Qin B."/>
            <person name="Jia H."/>
            <person name="Kenton S."/>
            <person name="Najar F."/>
            <person name="Wu H."/>
            <person name="Scott J."/>
            <person name="Roe B.A."/>
            <person name="Savic D.J."/>
        </authorList>
    </citation>
    <scope>NUCLEOTIDE SEQUENCE [LARGE SCALE GENOMIC DNA]</scope>
    <source>
        <strain>NZ131</strain>
    </source>
</reference>
<protein>
    <recommendedName>
        <fullName evidence="1">Histidine--tRNA ligase</fullName>
        <ecNumber evidence="1">6.1.1.21</ecNumber>
    </recommendedName>
    <alternativeName>
        <fullName evidence="1">Histidyl-tRNA synthetase</fullName>
        <shortName evidence="1">HisRS</shortName>
    </alternativeName>
</protein>
<accession>B5XJ83</accession>
<organism>
    <name type="scientific">Streptococcus pyogenes serotype M49 (strain NZ131)</name>
    <dbReference type="NCBI Taxonomy" id="471876"/>
    <lineage>
        <taxon>Bacteria</taxon>
        <taxon>Bacillati</taxon>
        <taxon>Bacillota</taxon>
        <taxon>Bacilli</taxon>
        <taxon>Lactobacillales</taxon>
        <taxon>Streptococcaceae</taxon>
        <taxon>Streptococcus</taxon>
    </lineage>
</organism>
<sequence>MKLQKPKGTQDILPGDAAKWQYVESVARDTFSQYNYGEIRTPMFEHYEVISRSVGDTTDIVTKEMYDFYDKGDRHITLRPEGTAPVVRSYVENKLFAPEVQKPVKLYYIGSMFRYERPQAGRLREFHQIGVECFGAANPATDVETIAMAYHLFEKLGIKDVTLHLNSLGSPESRAAYRQALIDYLTPMRDQLSKDSQRRLDENPLRVLDSKEKEDKLAVEKAPSILDYLDEESQAHFEAVKDMLEALDIPYVIDTNMVRGLDYYNHTIFEFITSVEGSDLTICAGGRYDSLVGYFGGPETPGFGFGLGLERLLMIIEKQGITLPIETEMDVYLAVLGDGANSKALELVQAIRRQGFTAERDYLGRKIKAQFKSADTFKAKLVMTLGESEVEAGKAVIKNNRSRQEVEVSFEDMMTNFANISEQLLS</sequence>
<dbReference type="EC" id="6.1.1.21" evidence="1"/>
<dbReference type="EMBL" id="CP000829">
    <property type="protein sequence ID" value="ACI62017.1"/>
    <property type="molecule type" value="Genomic_DNA"/>
</dbReference>
<dbReference type="SMR" id="B5XJ83"/>
<dbReference type="KEGG" id="soz:Spy49_1769c"/>
<dbReference type="HOGENOM" id="CLU_025113_1_1_9"/>
<dbReference type="Proteomes" id="UP000001039">
    <property type="component" value="Chromosome"/>
</dbReference>
<dbReference type="GO" id="GO:0005737">
    <property type="term" value="C:cytoplasm"/>
    <property type="evidence" value="ECO:0007669"/>
    <property type="project" value="UniProtKB-SubCell"/>
</dbReference>
<dbReference type="GO" id="GO:0005524">
    <property type="term" value="F:ATP binding"/>
    <property type="evidence" value="ECO:0007669"/>
    <property type="project" value="UniProtKB-UniRule"/>
</dbReference>
<dbReference type="GO" id="GO:0140096">
    <property type="term" value="F:catalytic activity, acting on a protein"/>
    <property type="evidence" value="ECO:0007669"/>
    <property type="project" value="UniProtKB-ARBA"/>
</dbReference>
<dbReference type="GO" id="GO:0004821">
    <property type="term" value="F:histidine-tRNA ligase activity"/>
    <property type="evidence" value="ECO:0007669"/>
    <property type="project" value="UniProtKB-UniRule"/>
</dbReference>
<dbReference type="GO" id="GO:0016740">
    <property type="term" value="F:transferase activity"/>
    <property type="evidence" value="ECO:0007669"/>
    <property type="project" value="UniProtKB-ARBA"/>
</dbReference>
<dbReference type="GO" id="GO:0006427">
    <property type="term" value="P:histidyl-tRNA aminoacylation"/>
    <property type="evidence" value="ECO:0007669"/>
    <property type="project" value="UniProtKB-UniRule"/>
</dbReference>
<dbReference type="CDD" id="cd00773">
    <property type="entry name" value="HisRS-like_core"/>
    <property type="match status" value="1"/>
</dbReference>
<dbReference type="CDD" id="cd00859">
    <property type="entry name" value="HisRS_anticodon"/>
    <property type="match status" value="1"/>
</dbReference>
<dbReference type="FunFam" id="3.30.930.10:FF:000005">
    <property type="entry name" value="Histidine--tRNA ligase"/>
    <property type="match status" value="1"/>
</dbReference>
<dbReference type="Gene3D" id="3.40.50.800">
    <property type="entry name" value="Anticodon-binding domain"/>
    <property type="match status" value="1"/>
</dbReference>
<dbReference type="Gene3D" id="3.30.930.10">
    <property type="entry name" value="Bira Bifunctional Protein, Domain 2"/>
    <property type="match status" value="1"/>
</dbReference>
<dbReference type="HAMAP" id="MF_00127">
    <property type="entry name" value="His_tRNA_synth"/>
    <property type="match status" value="1"/>
</dbReference>
<dbReference type="InterPro" id="IPR006195">
    <property type="entry name" value="aa-tRNA-synth_II"/>
</dbReference>
<dbReference type="InterPro" id="IPR045864">
    <property type="entry name" value="aa-tRNA-synth_II/BPL/LPL"/>
</dbReference>
<dbReference type="InterPro" id="IPR004154">
    <property type="entry name" value="Anticodon-bd"/>
</dbReference>
<dbReference type="InterPro" id="IPR036621">
    <property type="entry name" value="Anticodon-bd_dom_sf"/>
</dbReference>
<dbReference type="InterPro" id="IPR015807">
    <property type="entry name" value="His-tRNA-ligase"/>
</dbReference>
<dbReference type="InterPro" id="IPR041715">
    <property type="entry name" value="HisRS-like_core"/>
</dbReference>
<dbReference type="InterPro" id="IPR004516">
    <property type="entry name" value="HisRS/HisZ"/>
</dbReference>
<dbReference type="InterPro" id="IPR033656">
    <property type="entry name" value="HisRS_anticodon"/>
</dbReference>
<dbReference type="NCBIfam" id="TIGR00442">
    <property type="entry name" value="hisS"/>
    <property type="match status" value="1"/>
</dbReference>
<dbReference type="PANTHER" id="PTHR43707:SF1">
    <property type="entry name" value="HISTIDINE--TRNA LIGASE, MITOCHONDRIAL-RELATED"/>
    <property type="match status" value="1"/>
</dbReference>
<dbReference type="PANTHER" id="PTHR43707">
    <property type="entry name" value="HISTIDYL-TRNA SYNTHETASE"/>
    <property type="match status" value="1"/>
</dbReference>
<dbReference type="Pfam" id="PF03129">
    <property type="entry name" value="HGTP_anticodon"/>
    <property type="match status" value="1"/>
</dbReference>
<dbReference type="Pfam" id="PF13393">
    <property type="entry name" value="tRNA-synt_His"/>
    <property type="match status" value="1"/>
</dbReference>
<dbReference type="PIRSF" id="PIRSF001549">
    <property type="entry name" value="His-tRNA_synth"/>
    <property type="match status" value="1"/>
</dbReference>
<dbReference type="SUPFAM" id="SSF52954">
    <property type="entry name" value="Class II aaRS ABD-related"/>
    <property type="match status" value="1"/>
</dbReference>
<dbReference type="SUPFAM" id="SSF55681">
    <property type="entry name" value="Class II aaRS and biotin synthetases"/>
    <property type="match status" value="1"/>
</dbReference>
<dbReference type="PROSITE" id="PS50862">
    <property type="entry name" value="AA_TRNA_LIGASE_II"/>
    <property type="match status" value="1"/>
</dbReference>
<keyword id="KW-0030">Aminoacyl-tRNA synthetase</keyword>
<keyword id="KW-0067">ATP-binding</keyword>
<keyword id="KW-0963">Cytoplasm</keyword>
<keyword id="KW-0436">Ligase</keyword>
<keyword id="KW-0547">Nucleotide-binding</keyword>
<keyword id="KW-0648">Protein biosynthesis</keyword>
<gene>
    <name evidence="1" type="primary">hisS</name>
    <name type="ordered locus">Spy49_1769c</name>
</gene>
<comment type="catalytic activity">
    <reaction evidence="1">
        <text>tRNA(His) + L-histidine + ATP = L-histidyl-tRNA(His) + AMP + diphosphate + H(+)</text>
        <dbReference type="Rhea" id="RHEA:17313"/>
        <dbReference type="Rhea" id="RHEA-COMP:9665"/>
        <dbReference type="Rhea" id="RHEA-COMP:9689"/>
        <dbReference type="ChEBI" id="CHEBI:15378"/>
        <dbReference type="ChEBI" id="CHEBI:30616"/>
        <dbReference type="ChEBI" id="CHEBI:33019"/>
        <dbReference type="ChEBI" id="CHEBI:57595"/>
        <dbReference type="ChEBI" id="CHEBI:78442"/>
        <dbReference type="ChEBI" id="CHEBI:78527"/>
        <dbReference type="ChEBI" id="CHEBI:456215"/>
        <dbReference type="EC" id="6.1.1.21"/>
    </reaction>
</comment>
<comment type="subunit">
    <text evidence="1">Homodimer.</text>
</comment>
<comment type="subcellular location">
    <subcellularLocation>
        <location evidence="1">Cytoplasm</location>
    </subcellularLocation>
</comment>
<comment type="similarity">
    <text evidence="1">Belongs to the class-II aminoacyl-tRNA synthetase family.</text>
</comment>
<proteinExistence type="inferred from homology"/>
<name>SYH_STRPZ</name>
<feature type="chain" id="PRO_1000095602" description="Histidine--tRNA ligase">
    <location>
        <begin position="1"/>
        <end position="426"/>
    </location>
</feature>
<evidence type="ECO:0000255" key="1">
    <source>
        <dbReference type="HAMAP-Rule" id="MF_00127"/>
    </source>
</evidence>